<proteinExistence type="evidence at transcript level"/>
<sequence length="334" mass="36833">MATVQQKLITPVSQERSDASRNKVTVVGVGQVGMACAVSILLRELTDEIALVDVLEDKLKGEMMDLLHGSLFLKTPKIMANKDYGITANSRVVVVTAGARQQEGESRLNLVQRNVNIFKFIIPQIVKYSPNCTIIVVSNPVDILTYVTWKISGFPKNRVIGSGCNLDSARFRYLMAEKLGLHPSSCHGWVLGEHGDSSVPVWSGVNVAGVGLQQLNPDIGTAQDKENWKDVHKMVVESAYEVIKLKGYTNWAIGLSVAELTESMVKNLKRVHPVSTMVKGMYGIENEVFLSLPCVLSADGLIDVINQMLKDDEVAQLRKSAETLWNIQKELKDL</sequence>
<organism>
    <name type="scientific">Squalus acanthias</name>
    <name type="common">Spiny dogfish</name>
    <dbReference type="NCBI Taxonomy" id="7797"/>
    <lineage>
        <taxon>Eukaryota</taxon>
        <taxon>Metazoa</taxon>
        <taxon>Chordata</taxon>
        <taxon>Craniata</taxon>
        <taxon>Vertebrata</taxon>
        <taxon>Chondrichthyes</taxon>
        <taxon>Elasmobranchii</taxon>
        <taxon>Squalomorphii</taxon>
        <taxon>Squaliformes</taxon>
        <taxon>Squalidae</taxon>
        <taxon>Squalus</taxon>
    </lineage>
</organism>
<comment type="function">
    <text evidence="2">Interconverts simultaneously and stereospecifically pyruvate and lactate with concomitant interconversion of NADH and NAD(+).</text>
</comment>
<comment type="catalytic activity">
    <reaction evidence="2">
        <text>(S)-lactate + NAD(+) = pyruvate + NADH + H(+)</text>
        <dbReference type="Rhea" id="RHEA:23444"/>
        <dbReference type="ChEBI" id="CHEBI:15361"/>
        <dbReference type="ChEBI" id="CHEBI:15378"/>
        <dbReference type="ChEBI" id="CHEBI:16651"/>
        <dbReference type="ChEBI" id="CHEBI:57540"/>
        <dbReference type="ChEBI" id="CHEBI:57945"/>
        <dbReference type="EC" id="1.1.1.27"/>
    </reaction>
    <physiologicalReaction direction="left-to-right" evidence="2">
        <dbReference type="Rhea" id="RHEA:23445"/>
    </physiologicalReaction>
    <physiologicalReaction direction="right-to-left" evidence="2">
        <dbReference type="Rhea" id="RHEA:23446"/>
    </physiologicalReaction>
</comment>
<comment type="pathway">
    <text evidence="2">Fermentation; pyruvate fermentation to lactate; (S)-lactate from pyruvate: step 1/1.</text>
</comment>
<comment type="subunit">
    <text evidence="1">Homotetramer.</text>
</comment>
<comment type="subcellular location">
    <subcellularLocation>
        <location evidence="1">Cytoplasm</location>
    </subcellularLocation>
</comment>
<comment type="similarity">
    <text evidence="3">Belongs to the LDH/MDH superfamily. LDH family.</text>
</comment>
<protein>
    <recommendedName>
        <fullName>L-lactate dehydrogenase B chain</fullName>
        <shortName>LDH-B</shortName>
        <ecNumber evidence="2">1.1.1.27</ecNumber>
    </recommendedName>
</protein>
<accession>Q9YI05</accession>
<dbReference type="EC" id="1.1.1.27" evidence="2"/>
<dbReference type="EMBL" id="AF059035">
    <property type="protein sequence ID" value="AAD02703.1"/>
    <property type="molecule type" value="mRNA"/>
</dbReference>
<dbReference type="SMR" id="Q9YI05"/>
<dbReference type="UniPathway" id="UPA00554">
    <property type="reaction ID" value="UER00611"/>
</dbReference>
<dbReference type="GO" id="GO:0005737">
    <property type="term" value="C:cytoplasm"/>
    <property type="evidence" value="ECO:0007669"/>
    <property type="project" value="UniProtKB-SubCell"/>
</dbReference>
<dbReference type="GO" id="GO:0004459">
    <property type="term" value="F:L-lactate dehydrogenase activity"/>
    <property type="evidence" value="ECO:0007669"/>
    <property type="project" value="UniProtKB-EC"/>
</dbReference>
<dbReference type="GO" id="GO:0006089">
    <property type="term" value="P:lactate metabolic process"/>
    <property type="evidence" value="ECO:0007669"/>
    <property type="project" value="TreeGrafter"/>
</dbReference>
<dbReference type="CDD" id="cd05293">
    <property type="entry name" value="LDH_1"/>
    <property type="match status" value="1"/>
</dbReference>
<dbReference type="FunFam" id="3.40.50.720:FF:000029">
    <property type="entry name" value="L-lactate dehydrogenase A chain"/>
    <property type="match status" value="1"/>
</dbReference>
<dbReference type="FunFam" id="3.90.110.10:FF:000003">
    <property type="entry name" value="L-lactate dehydrogenase A chain"/>
    <property type="match status" value="1"/>
</dbReference>
<dbReference type="Gene3D" id="3.90.110.10">
    <property type="entry name" value="Lactate dehydrogenase/glycoside hydrolase, family 4, C-terminal"/>
    <property type="match status" value="1"/>
</dbReference>
<dbReference type="Gene3D" id="3.40.50.720">
    <property type="entry name" value="NAD(P)-binding Rossmann-like Domain"/>
    <property type="match status" value="1"/>
</dbReference>
<dbReference type="HAMAP" id="MF_00488">
    <property type="entry name" value="Lactate_dehydrog"/>
    <property type="match status" value="1"/>
</dbReference>
<dbReference type="InterPro" id="IPR001557">
    <property type="entry name" value="L-lactate/malate_DH"/>
</dbReference>
<dbReference type="InterPro" id="IPR011304">
    <property type="entry name" value="L-lactate_DH"/>
</dbReference>
<dbReference type="InterPro" id="IPR018177">
    <property type="entry name" value="L-lactate_DH_AS"/>
</dbReference>
<dbReference type="InterPro" id="IPR022383">
    <property type="entry name" value="Lactate/malate_DH_C"/>
</dbReference>
<dbReference type="InterPro" id="IPR001236">
    <property type="entry name" value="Lactate/malate_DH_N"/>
</dbReference>
<dbReference type="InterPro" id="IPR015955">
    <property type="entry name" value="Lactate_DH/Glyco_Ohase_4_C"/>
</dbReference>
<dbReference type="InterPro" id="IPR036291">
    <property type="entry name" value="NAD(P)-bd_dom_sf"/>
</dbReference>
<dbReference type="NCBIfam" id="TIGR01771">
    <property type="entry name" value="L-LDH-NAD"/>
    <property type="match status" value="1"/>
</dbReference>
<dbReference type="PANTHER" id="PTHR43128">
    <property type="entry name" value="L-2-HYDROXYCARBOXYLATE DEHYDROGENASE (NAD(P)(+))"/>
    <property type="match status" value="1"/>
</dbReference>
<dbReference type="PANTHER" id="PTHR43128:SF2">
    <property type="entry name" value="L-LACTATE DEHYDROGENASE B CHAIN"/>
    <property type="match status" value="1"/>
</dbReference>
<dbReference type="Pfam" id="PF02866">
    <property type="entry name" value="Ldh_1_C"/>
    <property type="match status" value="1"/>
</dbReference>
<dbReference type="Pfam" id="PF00056">
    <property type="entry name" value="Ldh_1_N"/>
    <property type="match status" value="1"/>
</dbReference>
<dbReference type="PIRSF" id="PIRSF000102">
    <property type="entry name" value="Lac_mal_DH"/>
    <property type="match status" value="1"/>
</dbReference>
<dbReference type="PRINTS" id="PR00086">
    <property type="entry name" value="LLDHDRGNASE"/>
</dbReference>
<dbReference type="SUPFAM" id="SSF56327">
    <property type="entry name" value="LDH C-terminal domain-like"/>
    <property type="match status" value="1"/>
</dbReference>
<dbReference type="SUPFAM" id="SSF51735">
    <property type="entry name" value="NAD(P)-binding Rossmann-fold domains"/>
    <property type="match status" value="1"/>
</dbReference>
<dbReference type="PROSITE" id="PS00064">
    <property type="entry name" value="L_LDH"/>
    <property type="match status" value="1"/>
</dbReference>
<evidence type="ECO:0000250" key="1"/>
<evidence type="ECO:0000250" key="2">
    <source>
        <dbReference type="UniProtKB" id="P07195"/>
    </source>
</evidence>
<evidence type="ECO:0000305" key="3"/>
<feature type="chain" id="PRO_0000168478" description="L-lactate dehydrogenase B chain">
    <location>
        <begin position="1"/>
        <end position="334"/>
    </location>
</feature>
<feature type="active site" description="Proton acceptor" evidence="1">
    <location>
        <position position="194"/>
    </location>
</feature>
<feature type="binding site" evidence="1">
    <location>
        <begin position="30"/>
        <end position="58"/>
    </location>
    <ligand>
        <name>NAD(+)</name>
        <dbReference type="ChEBI" id="CHEBI:57540"/>
    </ligand>
</feature>
<feature type="binding site" evidence="1">
    <location>
        <position position="100"/>
    </location>
    <ligand>
        <name>NAD(+)</name>
        <dbReference type="ChEBI" id="CHEBI:57540"/>
    </ligand>
</feature>
<feature type="binding site" evidence="1">
    <location>
        <position position="107"/>
    </location>
    <ligand>
        <name>substrate</name>
    </ligand>
</feature>
<feature type="binding site" evidence="1">
    <location>
        <position position="139"/>
    </location>
    <ligand>
        <name>NAD(+)</name>
        <dbReference type="ChEBI" id="CHEBI:57540"/>
    </ligand>
</feature>
<feature type="binding site" evidence="1">
    <location>
        <position position="139"/>
    </location>
    <ligand>
        <name>substrate</name>
    </ligand>
</feature>
<feature type="binding site" evidence="1">
    <location>
        <position position="170"/>
    </location>
    <ligand>
        <name>substrate</name>
    </ligand>
</feature>
<feature type="binding site" evidence="1">
    <location>
        <position position="249"/>
    </location>
    <ligand>
        <name>substrate</name>
    </ligand>
</feature>
<gene>
    <name type="primary">ldhb</name>
</gene>
<name>LDHB_SQUAC</name>
<reference key="1">
    <citation type="journal article" date="1998" name="Mol. Mar. Biol. Biotechnol.">
        <title>A monophyletic origin of heart-predominant lactate dehydrogenase (LDH) isozymes of gnathostome vertebrates: evidence from the cDNA sequence of the spiny dogfish (Squalus acanthias) LDH-B.</title>
        <authorList>
            <person name="Stock D.W."/>
            <person name="Powers D.A."/>
        </authorList>
    </citation>
    <scope>NUCLEOTIDE SEQUENCE [MRNA]</scope>
    <source>
        <tissue>Heart muscle</tissue>
    </source>
</reference>
<keyword id="KW-0963">Cytoplasm</keyword>
<keyword id="KW-0520">NAD</keyword>
<keyword id="KW-0560">Oxidoreductase</keyword>